<dbReference type="EMBL" id="AF063245">
    <property type="protein sequence ID" value="AAC99331.1"/>
    <property type="molecule type" value="mRNA"/>
</dbReference>
<dbReference type="SMR" id="O97581"/>
<dbReference type="FunCoup" id="O97581">
    <property type="interactions" value="430"/>
</dbReference>
<dbReference type="STRING" id="9823.ENSSSCP00000035178"/>
<dbReference type="InParanoid" id="O97581"/>
<dbReference type="Proteomes" id="UP000008227">
    <property type="component" value="Unplaced"/>
</dbReference>
<dbReference type="Proteomes" id="UP000314985">
    <property type="component" value="Unplaced"/>
</dbReference>
<dbReference type="Proteomes" id="UP000694570">
    <property type="component" value="Unplaced"/>
</dbReference>
<dbReference type="Proteomes" id="UP000694571">
    <property type="component" value="Unplaced"/>
</dbReference>
<dbReference type="Proteomes" id="UP000694720">
    <property type="component" value="Unplaced"/>
</dbReference>
<dbReference type="Proteomes" id="UP000694722">
    <property type="component" value="Unplaced"/>
</dbReference>
<dbReference type="Proteomes" id="UP000694723">
    <property type="component" value="Unplaced"/>
</dbReference>
<dbReference type="Proteomes" id="UP000694724">
    <property type="component" value="Unplaced"/>
</dbReference>
<dbReference type="Proteomes" id="UP000694725">
    <property type="component" value="Unplaced"/>
</dbReference>
<dbReference type="Proteomes" id="UP000694726">
    <property type="component" value="Unplaced"/>
</dbReference>
<dbReference type="Proteomes" id="UP000694727">
    <property type="component" value="Unplaced"/>
</dbReference>
<dbReference type="Proteomes" id="UP000694728">
    <property type="component" value="Unplaced"/>
</dbReference>
<dbReference type="GO" id="GO:0005634">
    <property type="term" value="C:nucleus"/>
    <property type="evidence" value="ECO:0000314"/>
    <property type="project" value="UniProtKB"/>
</dbReference>
<dbReference type="GO" id="GO:0003677">
    <property type="term" value="F:DNA binding"/>
    <property type="evidence" value="ECO:0000314"/>
    <property type="project" value="UniProtKB"/>
</dbReference>
<dbReference type="GO" id="GO:0000981">
    <property type="term" value="F:DNA-binding transcription factor activity, RNA polymerase II-specific"/>
    <property type="evidence" value="ECO:0000318"/>
    <property type="project" value="GO_Central"/>
</dbReference>
<dbReference type="GO" id="GO:0000977">
    <property type="term" value="F:RNA polymerase II transcription regulatory region sequence-specific DNA binding"/>
    <property type="evidence" value="ECO:0000318"/>
    <property type="project" value="GO_Central"/>
</dbReference>
<dbReference type="GO" id="GO:0008270">
    <property type="term" value="F:zinc ion binding"/>
    <property type="evidence" value="ECO:0007669"/>
    <property type="project" value="InterPro"/>
</dbReference>
<dbReference type="GO" id="GO:0030182">
    <property type="term" value="P:neuron differentiation"/>
    <property type="evidence" value="ECO:0000318"/>
    <property type="project" value="GO_Central"/>
</dbReference>
<dbReference type="GO" id="GO:0045893">
    <property type="term" value="P:positive regulation of DNA-templated transcription"/>
    <property type="evidence" value="ECO:0000314"/>
    <property type="project" value="UniProtKB"/>
</dbReference>
<dbReference type="GO" id="GO:0006355">
    <property type="term" value="P:regulation of DNA-templated transcription"/>
    <property type="evidence" value="ECO:0000314"/>
    <property type="project" value="UniProtKB"/>
</dbReference>
<dbReference type="GO" id="GO:0006357">
    <property type="term" value="P:regulation of transcription by RNA polymerase II"/>
    <property type="evidence" value="ECO:0000318"/>
    <property type="project" value="GO_Central"/>
</dbReference>
<dbReference type="CDD" id="cd00086">
    <property type="entry name" value="homeodomain"/>
    <property type="match status" value="1"/>
</dbReference>
<dbReference type="CDD" id="cd09467">
    <property type="entry name" value="LIM1_Lhx3b"/>
    <property type="match status" value="1"/>
</dbReference>
<dbReference type="CDD" id="cd09376">
    <property type="entry name" value="LIM2_Lhx3_Lhx4"/>
    <property type="match status" value="1"/>
</dbReference>
<dbReference type="FunFam" id="2.10.110.10:FF:000120">
    <property type="entry name" value="Insulin gene enhancer protein ISL-2"/>
    <property type="match status" value="1"/>
</dbReference>
<dbReference type="FunFam" id="1.10.10.60:FF:000219">
    <property type="entry name" value="LIM/homeobox protein Lhx3"/>
    <property type="match status" value="1"/>
</dbReference>
<dbReference type="FunFam" id="2.10.110.10:FF:000032">
    <property type="entry name" value="LIM/homeobox protein Lhx3"/>
    <property type="match status" value="1"/>
</dbReference>
<dbReference type="Gene3D" id="2.10.110.10">
    <property type="entry name" value="Cysteine Rich Protein"/>
    <property type="match status" value="2"/>
</dbReference>
<dbReference type="Gene3D" id="1.10.10.60">
    <property type="entry name" value="Homeodomain-like"/>
    <property type="match status" value="1"/>
</dbReference>
<dbReference type="InterPro" id="IPR001356">
    <property type="entry name" value="HD"/>
</dbReference>
<dbReference type="InterPro" id="IPR017970">
    <property type="entry name" value="Homeobox_CS"/>
</dbReference>
<dbReference type="InterPro" id="IPR009057">
    <property type="entry name" value="Homeodomain-like_sf"/>
</dbReference>
<dbReference type="InterPro" id="IPR049594">
    <property type="entry name" value="Lhx3/4-like_LIM2"/>
</dbReference>
<dbReference type="InterPro" id="IPR049593">
    <property type="entry name" value="Lhx3_LIM1"/>
</dbReference>
<dbReference type="InterPro" id="IPR050453">
    <property type="entry name" value="LIM_Homeobox_TF"/>
</dbReference>
<dbReference type="InterPro" id="IPR001781">
    <property type="entry name" value="Znf_LIM"/>
</dbReference>
<dbReference type="PANTHER" id="PTHR24208">
    <property type="entry name" value="LIM/HOMEOBOX PROTEIN LHX"/>
    <property type="match status" value="1"/>
</dbReference>
<dbReference type="PANTHER" id="PTHR24208:SF91">
    <property type="entry name" value="LIM_HOMEOBOX PROTEIN LHX3"/>
    <property type="match status" value="1"/>
</dbReference>
<dbReference type="Pfam" id="PF00046">
    <property type="entry name" value="Homeodomain"/>
    <property type="match status" value="1"/>
</dbReference>
<dbReference type="Pfam" id="PF00412">
    <property type="entry name" value="LIM"/>
    <property type="match status" value="2"/>
</dbReference>
<dbReference type="SMART" id="SM00389">
    <property type="entry name" value="HOX"/>
    <property type="match status" value="1"/>
</dbReference>
<dbReference type="SMART" id="SM00132">
    <property type="entry name" value="LIM"/>
    <property type="match status" value="2"/>
</dbReference>
<dbReference type="SUPFAM" id="SSF57716">
    <property type="entry name" value="Glucocorticoid receptor-like (DNA-binding domain)"/>
    <property type="match status" value="2"/>
</dbReference>
<dbReference type="SUPFAM" id="SSF46689">
    <property type="entry name" value="Homeodomain-like"/>
    <property type="match status" value="1"/>
</dbReference>
<dbReference type="PROSITE" id="PS00027">
    <property type="entry name" value="HOMEOBOX_1"/>
    <property type="match status" value="1"/>
</dbReference>
<dbReference type="PROSITE" id="PS50071">
    <property type="entry name" value="HOMEOBOX_2"/>
    <property type="match status" value="1"/>
</dbReference>
<dbReference type="PROSITE" id="PS00478">
    <property type="entry name" value="LIM_DOMAIN_1"/>
    <property type="match status" value="2"/>
</dbReference>
<dbReference type="PROSITE" id="PS50023">
    <property type="entry name" value="LIM_DOMAIN_2"/>
    <property type="match status" value="2"/>
</dbReference>
<accession>O97581</accession>
<comment type="function">
    <text evidence="1 2 6">Transcription factor (PubMed:10195693). Recognizes and binds to the consensus sequence motif 5'-AATTAATTA-3' in the regulatory elements of target genes, such as glycoprotein hormones alpha chain CGA and visual system homeobox CHX10, positively modulating transcription; transcription can be co-activated by LDB2 (By similarity). Synergistically enhances transcription from the prolactin promoter in cooperation with POU1F1/Pit-1 (PubMed:10195693). Required for the establishment of the specialized cells of the pituitary gland and the nervous system (By similarity). Involved in the development of interneurons and motor neurons in cooperation with LDB1 and ISL1 (By similarity).</text>
</comment>
<comment type="subunit">
    <text evidence="1 2">Interacts with POU1F1 (By similarity). At neuronal promoters, interacts with LDB1, in motor neurons LDB1 is displaced by ISL1 and a ternary complex is formed in which ISL1 contacts both LHX3 and LDB1; allosteric structural changes in the DNA binding domain of LHX3, induced by the ISL1-LHX3 interaction, may explain differences in sequence specificity of the different complexes. Interacts with LDB2. May interact with CITED2/MRG1 (By similarity).</text>
</comment>
<comment type="subcellular location">
    <subcellularLocation>
        <location evidence="7">Nucleus</location>
    </subcellularLocation>
</comment>
<comment type="domain">
    <text evidence="1">The LIM domain specifically interacts with the Pit-1 POU domain and is required for synergistic interactions with Pit-1, but not for basal transcriptional activation events.</text>
</comment>
<gene>
    <name type="primary">LHX3</name>
</gene>
<name>LHX3_PIG</name>
<evidence type="ECO:0000250" key="1">
    <source>
        <dbReference type="UniProtKB" id="P50481"/>
    </source>
</evidence>
<evidence type="ECO:0000250" key="2">
    <source>
        <dbReference type="UniProtKB" id="Q9UBR4"/>
    </source>
</evidence>
<evidence type="ECO:0000255" key="3">
    <source>
        <dbReference type="PROSITE-ProRule" id="PRU00108"/>
    </source>
</evidence>
<evidence type="ECO:0000255" key="4">
    <source>
        <dbReference type="PROSITE-ProRule" id="PRU00125"/>
    </source>
</evidence>
<evidence type="ECO:0000256" key="5">
    <source>
        <dbReference type="SAM" id="MobiDB-lite"/>
    </source>
</evidence>
<evidence type="ECO:0000269" key="6">
    <source>
    </source>
</evidence>
<evidence type="ECO:0000305" key="7"/>
<evidence type="ECO:0000312" key="8">
    <source>
        <dbReference type="EMBL" id="AAC99331.1"/>
    </source>
</evidence>
<proteinExistence type="evidence at transcript level"/>
<keyword id="KW-0010">Activator</keyword>
<keyword id="KW-0238">DNA-binding</keyword>
<keyword id="KW-0371">Homeobox</keyword>
<keyword id="KW-0440">LIM domain</keyword>
<keyword id="KW-0479">Metal-binding</keyword>
<keyword id="KW-0539">Nucleus</keyword>
<keyword id="KW-0597">Phosphoprotein</keyword>
<keyword id="KW-1185">Reference proteome</keyword>
<keyword id="KW-0677">Repeat</keyword>
<keyword id="KW-0804">Transcription</keyword>
<keyword id="KW-0805">Transcription regulation</keyword>
<keyword id="KW-0862">Zinc</keyword>
<organism evidence="8">
    <name type="scientific">Sus scrofa</name>
    <name type="common">Pig</name>
    <dbReference type="NCBI Taxonomy" id="9823"/>
    <lineage>
        <taxon>Eukaryota</taxon>
        <taxon>Metazoa</taxon>
        <taxon>Chordata</taxon>
        <taxon>Craniata</taxon>
        <taxon>Vertebrata</taxon>
        <taxon>Euteleostomi</taxon>
        <taxon>Mammalia</taxon>
        <taxon>Eutheria</taxon>
        <taxon>Laurasiatheria</taxon>
        <taxon>Artiodactyla</taxon>
        <taxon>Suina</taxon>
        <taxon>Suidae</taxon>
        <taxon>Sus</taxon>
    </lineage>
</organism>
<reference evidence="7" key="1">
    <citation type="journal article" date="1999" name="Mol. Cell. Endocrinol.">
        <title>Characterization of the porcine Lhx3/LIM-3/P-Lim LIM homeodomain transcription factor.</title>
        <authorList>
            <person name="Meier B.C."/>
            <person name="Price J.R."/>
            <person name="Parker G.E."/>
            <person name="Bridwell J.L."/>
            <person name="Rhodes S.J."/>
        </authorList>
    </citation>
    <scope>NUCLEOTIDE SEQUENCE [MRNA]</scope>
    <scope>FUNCTION</scope>
    <source>
        <tissue>Pituitary</tissue>
    </source>
</reference>
<protein>
    <recommendedName>
        <fullName>LIM/homeobox protein Lhx3</fullName>
        <shortName>LIM homeobox protein 3</shortName>
    </recommendedName>
    <alternativeName>
        <fullName>Homeobox protein LIM-3</fullName>
    </alternativeName>
    <alternativeName>
        <fullName>Homeobox protein P-LIM</fullName>
    </alternativeName>
</protein>
<feature type="chain" id="PRO_0000075783" description="LIM/homeobox protein Lhx3">
    <location>
        <begin position="1" status="less than"/>
        <end position="383"/>
    </location>
</feature>
<feature type="domain" description="LIM zinc-binding 1" evidence="4">
    <location>
        <begin position="14"/>
        <end position="73"/>
    </location>
</feature>
<feature type="domain" description="LIM zinc-binding 2" evidence="4">
    <location>
        <begin position="73"/>
        <end position="136"/>
    </location>
</feature>
<feature type="DNA-binding region" description="Homeobox" evidence="3">
    <location>
        <begin position="142"/>
        <end position="201"/>
    </location>
</feature>
<feature type="region of interest" description="Disordered" evidence="5">
    <location>
        <begin position="197"/>
        <end position="383"/>
    </location>
</feature>
<feature type="compositionally biased region" description="Low complexity" evidence="5">
    <location>
        <begin position="307"/>
        <end position="334"/>
    </location>
</feature>
<feature type="compositionally biased region" description="Pro residues" evidence="5">
    <location>
        <begin position="335"/>
        <end position="344"/>
    </location>
</feature>
<feature type="modified residue" description="Phosphothreonine" evidence="2">
    <location>
        <position position="48"/>
    </location>
</feature>
<feature type="modified residue" description="Phosphoserine" evidence="2">
    <location>
        <position position="56"/>
    </location>
</feature>
<feature type="modified residue" description="Phosphotyrosine" evidence="2">
    <location>
        <position position="212"/>
    </location>
</feature>
<feature type="modified residue" description="Phosphoserine" evidence="2">
    <location>
        <position position="223"/>
    </location>
</feature>
<feature type="non-terminal residue" evidence="8">
    <location>
        <position position="1"/>
    </location>
</feature>
<sequence length="383" mass="41825">WEGRPQELGGKEIPLCAGCDQHILDRFILKALDRHWHSKCLKCSDCHTPLAERCFSRGESLYCKDDFFKRFGTKCAACQLGIPPTQVVRRAQDFVYHLHCFACVVCKRQLATGDEFYLMEDSRLVCKADYETAKQREAEATAKRPRTTITAKQLETLKSAYNTSPKPARHVREQLSSETGLDMRVVQVWFQNRRAKEKRLKKDAGRQRWGQYFRNMKRARGGSKSDKDSVQEEGQDSDAEVSFTDEPSMAEMGPANGLYGGLGEPAPALGRPSGAPGSFPLEHGGLAGPEQYGELRPSSPYGVPSSPAALQSLPGPQPLLSSLVYPEAGLGLVPAGPPGGPPPMRVLAGNGPSSDLSTGSSGGYPDFPASPASWLDEVDHAQF</sequence>